<sequence length="417" mass="44660">MLEQMGIAAKQASYKLAQLSSREKNRVLEKIADELEAQSEIILNANAQDVADARANGLSEAMLDRLALTPARLKGIADDVRQVCNLADPVGQVIDGGVLDSGLRLERRRVPLGVIGVIYEARPNVTVDVASLCLKTGNAVILRGGKETCRTNAATVAVIQDALKSCDLPAGAVQAIDNPDRALVSEMLRMDKYIDMLIPRGGAGLHKLCREQSTIPVITGGIGVCHIYVDESAEIAEALKVIVNAKTQRPSTCNTVETLLVNKNIADSFLPALSKQMAESGVTLHADAAALAQLQAGPAKVVAVKAEEYDDEFLSLDLNVKIVSDLDDAIAHIREHGTQHSDAILTRDMRNAQRFVNEVDSSAVYVNASTRFTDGGQFGLGAEVAVSTQKLHARGPMGLEALTTYKWIGIGDYTIRA</sequence>
<protein>
    <recommendedName>
        <fullName evidence="1">Gamma-glutamyl phosphate reductase</fullName>
        <shortName evidence="1">GPR</shortName>
        <ecNumber evidence="1">1.2.1.41</ecNumber>
    </recommendedName>
    <alternativeName>
        <fullName evidence="1">Glutamate-5-semialdehyde dehydrogenase</fullName>
    </alternativeName>
    <alternativeName>
        <fullName evidence="1">Glutamyl-gamma-semialdehyde dehydrogenase</fullName>
        <shortName evidence="1">GSA dehydrogenase</shortName>
    </alternativeName>
</protein>
<comment type="function">
    <text evidence="1">Catalyzes the NADPH-dependent reduction of L-glutamate 5-phosphate into L-glutamate 5-semialdehyde and phosphate. The product spontaneously undergoes cyclization to form 1-pyrroline-5-carboxylate.</text>
</comment>
<comment type="catalytic activity">
    <reaction evidence="1">
        <text>L-glutamate 5-semialdehyde + phosphate + NADP(+) = L-glutamyl 5-phosphate + NADPH + H(+)</text>
        <dbReference type="Rhea" id="RHEA:19541"/>
        <dbReference type="ChEBI" id="CHEBI:15378"/>
        <dbReference type="ChEBI" id="CHEBI:43474"/>
        <dbReference type="ChEBI" id="CHEBI:57783"/>
        <dbReference type="ChEBI" id="CHEBI:58066"/>
        <dbReference type="ChEBI" id="CHEBI:58274"/>
        <dbReference type="ChEBI" id="CHEBI:58349"/>
        <dbReference type="EC" id="1.2.1.41"/>
    </reaction>
</comment>
<comment type="pathway">
    <text evidence="1">Amino-acid biosynthesis; L-proline biosynthesis; L-glutamate 5-semialdehyde from L-glutamate: step 2/2.</text>
</comment>
<comment type="subcellular location">
    <subcellularLocation>
        <location evidence="1">Cytoplasm</location>
    </subcellularLocation>
</comment>
<comment type="similarity">
    <text evidence="1">Belongs to the gamma-glutamyl phosphate reductase family.</text>
</comment>
<proteinExistence type="inferred from homology"/>
<feature type="chain" id="PRO_1000193605" description="Gamma-glutamyl phosphate reductase">
    <location>
        <begin position="1"/>
        <end position="417"/>
    </location>
</feature>
<dbReference type="EC" id="1.2.1.41" evidence="1"/>
<dbReference type="EMBL" id="CP000970">
    <property type="protein sequence ID" value="ACB18487.1"/>
    <property type="molecule type" value="Genomic_DNA"/>
</dbReference>
<dbReference type="RefSeq" id="WP_000893265.1">
    <property type="nucleotide sequence ID" value="NC_010498.1"/>
</dbReference>
<dbReference type="SMR" id="B1LHT9"/>
<dbReference type="KEGG" id="ecm:EcSMS35_0297"/>
<dbReference type="HOGENOM" id="CLU_030231_0_0_6"/>
<dbReference type="UniPathway" id="UPA00098">
    <property type="reaction ID" value="UER00360"/>
</dbReference>
<dbReference type="Proteomes" id="UP000007011">
    <property type="component" value="Chromosome"/>
</dbReference>
<dbReference type="GO" id="GO:0005737">
    <property type="term" value="C:cytoplasm"/>
    <property type="evidence" value="ECO:0007669"/>
    <property type="project" value="UniProtKB-SubCell"/>
</dbReference>
<dbReference type="GO" id="GO:0004350">
    <property type="term" value="F:glutamate-5-semialdehyde dehydrogenase activity"/>
    <property type="evidence" value="ECO:0007669"/>
    <property type="project" value="UniProtKB-UniRule"/>
</dbReference>
<dbReference type="GO" id="GO:0050661">
    <property type="term" value="F:NADP binding"/>
    <property type="evidence" value="ECO:0007669"/>
    <property type="project" value="InterPro"/>
</dbReference>
<dbReference type="GO" id="GO:0055129">
    <property type="term" value="P:L-proline biosynthetic process"/>
    <property type="evidence" value="ECO:0007669"/>
    <property type="project" value="UniProtKB-UniRule"/>
</dbReference>
<dbReference type="CDD" id="cd07079">
    <property type="entry name" value="ALDH_F18-19_ProA-GPR"/>
    <property type="match status" value="1"/>
</dbReference>
<dbReference type="FunFam" id="3.40.309.10:FF:000006">
    <property type="entry name" value="Gamma-glutamyl phosphate reductase"/>
    <property type="match status" value="1"/>
</dbReference>
<dbReference type="Gene3D" id="3.40.605.10">
    <property type="entry name" value="Aldehyde Dehydrogenase, Chain A, domain 1"/>
    <property type="match status" value="1"/>
</dbReference>
<dbReference type="Gene3D" id="3.40.309.10">
    <property type="entry name" value="Aldehyde Dehydrogenase, Chain A, domain 2"/>
    <property type="match status" value="1"/>
</dbReference>
<dbReference type="HAMAP" id="MF_00412">
    <property type="entry name" value="ProA"/>
    <property type="match status" value="1"/>
</dbReference>
<dbReference type="InterPro" id="IPR016161">
    <property type="entry name" value="Ald_DH/histidinol_DH"/>
</dbReference>
<dbReference type="InterPro" id="IPR016163">
    <property type="entry name" value="Ald_DH_C"/>
</dbReference>
<dbReference type="InterPro" id="IPR016162">
    <property type="entry name" value="Ald_DH_N"/>
</dbReference>
<dbReference type="InterPro" id="IPR015590">
    <property type="entry name" value="Aldehyde_DH_dom"/>
</dbReference>
<dbReference type="InterPro" id="IPR020593">
    <property type="entry name" value="G-glutamylP_reductase_CS"/>
</dbReference>
<dbReference type="InterPro" id="IPR012134">
    <property type="entry name" value="Glu-5-SA_DH"/>
</dbReference>
<dbReference type="InterPro" id="IPR000965">
    <property type="entry name" value="GPR_dom"/>
</dbReference>
<dbReference type="NCBIfam" id="NF001221">
    <property type="entry name" value="PRK00197.1"/>
    <property type="match status" value="1"/>
</dbReference>
<dbReference type="NCBIfam" id="TIGR00407">
    <property type="entry name" value="proA"/>
    <property type="match status" value="1"/>
</dbReference>
<dbReference type="PANTHER" id="PTHR11063:SF8">
    <property type="entry name" value="DELTA-1-PYRROLINE-5-CARBOXYLATE SYNTHASE"/>
    <property type="match status" value="1"/>
</dbReference>
<dbReference type="PANTHER" id="PTHR11063">
    <property type="entry name" value="GLUTAMATE SEMIALDEHYDE DEHYDROGENASE"/>
    <property type="match status" value="1"/>
</dbReference>
<dbReference type="Pfam" id="PF00171">
    <property type="entry name" value="Aldedh"/>
    <property type="match status" value="1"/>
</dbReference>
<dbReference type="PIRSF" id="PIRSF000151">
    <property type="entry name" value="GPR"/>
    <property type="match status" value="1"/>
</dbReference>
<dbReference type="SUPFAM" id="SSF53720">
    <property type="entry name" value="ALDH-like"/>
    <property type="match status" value="1"/>
</dbReference>
<dbReference type="PROSITE" id="PS01223">
    <property type="entry name" value="PROA"/>
    <property type="match status" value="1"/>
</dbReference>
<gene>
    <name evidence="1" type="primary">proA</name>
    <name type="ordered locus">EcSMS35_0297</name>
</gene>
<evidence type="ECO:0000255" key="1">
    <source>
        <dbReference type="HAMAP-Rule" id="MF_00412"/>
    </source>
</evidence>
<reference key="1">
    <citation type="journal article" date="2008" name="J. Bacteriol.">
        <title>Insights into the environmental resistance gene pool from the genome sequence of the multidrug-resistant environmental isolate Escherichia coli SMS-3-5.</title>
        <authorList>
            <person name="Fricke W.F."/>
            <person name="Wright M.S."/>
            <person name="Lindell A.H."/>
            <person name="Harkins D.M."/>
            <person name="Baker-Austin C."/>
            <person name="Ravel J."/>
            <person name="Stepanauskas R."/>
        </authorList>
    </citation>
    <scope>NUCLEOTIDE SEQUENCE [LARGE SCALE GENOMIC DNA]</scope>
    <source>
        <strain>SMS-3-5 / SECEC</strain>
    </source>
</reference>
<organism>
    <name type="scientific">Escherichia coli (strain SMS-3-5 / SECEC)</name>
    <dbReference type="NCBI Taxonomy" id="439855"/>
    <lineage>
        <taxon>Bacteria</taxon>
        <taxon>Pseudomonadati</taxon>
        <taxon>Pseudomonadota</taxon>
        <taxon>Gammaproteobacteria</taxon>
        <taxon>Enterobacterales</taxon>
        <taxon>Enterobacteriaceae</taxon>
        <taxon>Escherichia</taxon>
    </lineage>
</organism>
<accession>B1LHT9</accession>
<keyword id="KW-0028">Amino-acid biosynthesis</keyword>
<keyword id="KW-0963">Cytoplasm</keyword>
<keyword id="KW-0521">NADP</keyword>
<keyword id="KW-0560">Oxidoreductase</keyword>
<keyword id="KW-0641">Proline biosynthesis</keyword>
<name>PROA_ECOSM</name>